<sequence length="112" mass="13045">MDVYRIKKNAEFRAVYKRGKSFSNNLLVLYVYMNRKNVNRLGVSVSKKVGKSVVRNRIKRLIKESFRLNSDYMKVENGYDLVFIARKASNGKSYVEINNSVKNLIKKAGLYK</sequence>
<accession>A5N455</accession>
<organism>
    <name type="scientific">Clostridium kluyveri (strain ATCC 8527 / DSM 555 / NBRC 12016 / NCIMB 10680 / K1)</name>
    <dbReference type="NCBI Taxonomy" id="431943"/>
    <lineage>
        <taxon>Bacteria</taxon>
        <taxon>Bacillati</taxon>
        <taxon>Bacillota</taxon>
        <taxon>Clostridia</taxon>
        <taxon>Eubacteriales</taxon>
        <taxon>Clostridiaceae</taxon>
        <taxon>Clostridium</taxon>
    </lineage>
</organism>
<name>RNPA_CLOK5</name>
<gene>
    <name evidence="1" type="primary">rnpA</name>
    <name type="ordered locus">CKL_3925</name>
</gene>
<proteinExistence type="inferred from homology"/>
<reference key="1">
    <citation type="journal article" date="2008" name="Proc. Natl. Acad. Sci. U.S.A.">
        <title>The genome of Clostridium kluyveri, a strict anaerobe with unique metabolic features.</title>
        <authorList>
            <person name="Seedorf H."/>
            <person name="Fricke W.F."/>
            <person name="Veith B."/>
            <person name="Brueggemann H."/>
            <person name="Liesegang H."/>
            <person name="Strittmatter A."/>
            <person name="Miethke M."/>
            <person name="Buckel W."/>
            <person name="Hinderberger J."/>
            <person name="Li F."/>
            <person name="Hagemeier C."/>
            <person name="Thauer R.K."/>
            <person name="Gottschalk G."/>
        </authorList>
    </citation>
    <scope>NUCLEOTIDE SEQUENCE [LARGE SCALE GENOMIC DNA]</scope>
    <source>
        <strain>ATCC 8527 / DSM 555 / NBRC 12016 / NCIMB 10680 / K1</strain>
    </source>
</reference>
<keyword id="KW-0255">Endonuclease</keyword>
<keyword id="KW-0378">Hydrolase</keyword>
<keyword id="KW-0540">Nuclease</keyword>
<keyword id="KW-1185">Reference proteome</keyword>
<keyword id="KW-0694">RNA-binding</keyword>
<keyword id="KW-0819">tRNA processing</keyword>
<dbReference type="EC" id="3.1.26.5" evidence="1"/>
<dbReference type="EMBL" id="CP000673">
    <property type="protein sequence ID" value="EDK35901.1"/>
    <property type="molecule type" value="Genomic_DNA"/>
</dbReference>
<dbReference type="RefSeq" id="WP_012104238.1">
    <property type="nucleotide sequence ID" value="NC_009706.1"/>
</dbReference>
<dbReference type="SMR" id="A5N455"/>
<dbReference type="STRING" id="431943.CKL_3925"/>
<dbReference type="KEGG" id="ckl:CKL_3925"/>
<dbReference type="eggNOG" id="COG0594">
    <property type="taxonomic scope" value="Bacteria"/>
</dbReference>
<dbReference type="HOGENOM" id="CLU_117179_9_3_9"/>
<dbReference type="Proteomes" id="UP000002411">
    <property type="component" value="Chromosome"/>
</dbReference>
<dbReference type="GO" id="GO:0030677">
    <property type="term" value="C:ribonuclease P complex"/>
    <property type="evidence" value="ECO:0007669"/>
    <property type="project" value="TreeGrafter"/>
</dbReference>
<dbReference type="GO" id="GO:0042781">
    <property type="term" value="F:3'-tRNA processing endoribonuclease activity"/>
    <property type="evidence" value="ECO:0007669"/>
    <property type="project" value="TreeGrafter"/>
</dbReference>
<dbReference type="GO" id="GO:0004526">
    <property type="term" value="F:ribonuclease P activity"/>
    <property type="evidence" value="ECO:0007669"/>
    <property type="project" value="UniProtKB-UniRule"/>
</dbReference>
<dbReference type="GO" id="GO:0000049">
    <property type="term" value="F:tRNA binding"/>
    <property type="evidence" value="ECO:0007669"/>
    <property type="project" value="UniProtKB-UniRule"/>
</dbReference>
<dbReference type="GO" id="GO:0001682">
    <property type="term" value="P:tRNA 5'-leader removal"/>
    <property type="evidence" value="ECO:0007669"/>
    <property type="project" value="UniProtKB-UniRule"/>
</dbReference>
<dbReference type="Gene3D" id="3.30.230.10">
    <property type="match status" value="1"/>
</dbReference>
<dbReference type="HAMAP" id="MF_00227">
    <property type="entry name" value="RNase_P"/>
    <property type="match status" value="1"/>
</dbReference>
<dbReference type="InterPro" id="IPR020568">
    <property type="entry name" value="Ribosomal_Su5_D2-typ_SF"/>
</dbReference>
<dbReference type="InterPro" id="IPR014721">
    <property type="entry name" value="Ribsml_uS5_D2-typ_fold_subgr"/>
</dbReference>
<dbReference type="InterPro" id="IPR000100">
    <property type="entry name" value="RNase_P"/>
</dbReference>
<dbReference type="NCBIfam" id="TIGR00188">
    <property type="entry name" value="rnpA"/>
    <property type="match status" value="1"/>
</dbReference>
<dbReference type="PANTHER" id="PTHR33992">
    <property type="entry name" value="RIBONUCLEASE P PROTEIN COMPONENT"/>
    <property type="match status" value="1"/>
</dbReference>
<dbReference type="PANTHER" id="PTHR33992:SF1">
    <property type="entry name" value="RIBONUCLEASE P PROTEIN COMPONENT"/>
    <property type="match status" value="1"/>
</dbReference>
<dbReference type="Pfam" id="PF00825">
    <property type="entry name" value="Ribonuclease_P"/>
    <property type="match status" value="1"/>
</dbReference>
<dbReference type="SUPFAM" id="SSF54211">
    <property type="entry name" value="Ribosomal protein S5 domain 2-like"/>
    <property type="match status" value="1"/>
</dbReference>
<protein>
    <recommendedName>
        <fullName evidence="1">Ribonuclease P protein component</fullName>
        <shortName evidence="1">RNase P protein</shortName>
        <shortName evidence="1">RNaseP protein</shortName>
        <ecNumber evidence="1">3.1.26.5</ecNumber>
    </recommendedName>
    <alternativeName>
        <fullName evidence="1">Protein C5</fullName>
    </alternativeName>
</protein>
<comment type="function">
    <text evidence="1">RNaseP catalyzes the removal of the 5'-leader sequence from pre-tRNA to produce the mature 5'-terminus. It can also cleave other RNA substrates such as 4.5S RNA. The protein component plays an auxiliary but essential role in vivo by binding to the 5'-leader sequence and broadening the substrate specificity of the ribozyme.</text>
</comment>
<comment type="catalytic activity">
    <reaction evidence="1">
        <text>Endonucleolytic cleavage of RNA, removing 5'-extranucleotides from tRNA precursor.</text>
        <dbReference type="EC" id="3.1.26.5"/>
    </reaction>
</comment>
<comment type="subunit">
    <text evidence="1">Consists of a catalytic RNA component (M1 or rnpB) and a protein subunit.</text>
</comment>
<comment type="similarity">
    <text evidence="1">Belongs to the RnpA family.</text>
</comment>
<feature type="chain" id="PRO_1000078193" description="Ribonuclease P protein component">
    <location>
        <begin position="1"/>
        <end position="112"/>
    </location>
</feature>
<evidence type="ECO:0000255" key="1">
    <source>
        <dbReference type="HAMAP-Rule" id="MF_00227"/>
    </source>
</evidence>